<reference key="1">
    <citation type="journal article" date="1999" name="Nature">
        <title>Genomic sequence comparison of two unrelated isolates of the human gastric pathogen Helicobacter pylori.</title>
        <authorList>
            <person name="Alm R.A."/>
            <person name="Ling L.-S.L."/>
            <person name="Moir D.T."/>
            <person name="King B.L."/>
            <person name="Brown E.D."/>
            <person name="Doig P.C."/>
            <person name="Smith D.R."/>
            <person name="Noonan B."/>
            <person name="Guild B.C."/>
            <person name="deJonge B.L."/>
            <person name="Carmel G."/>
            <person name="Tummino P.J."/>
            <person name="Caruso A."/>
            <person name="Uria-Nickelsen M."/>
            <person name="Mills D.M."/>
            <person name="Ives C."/>
            <person name="Gibson R."/>
            <person name="Merberg D."/>
            <person name="Mills S.D."/>
            <person name="Jiang Q."/>
            <person name="Taylor D.E."/>
            <person name="Vovis G.F."/>
            <person name="Trust T.J."/>
        </authorList>
    </citation>
    <scope>NUCLEOTIDE SEQUENCE [LARGE SCALE GENOMIC DNA]</scope>
    <source>
        <strain>J99 / ATCC 700824</strain>
    </source>
</reference>
<proteinExistence type="inferred from homology"/>
<organism>
    <name type="scientific">Helicobacter pylori (strain J99 / ATCC 700824)</name>
    <name type="common">Campylobacter pylori J99</name>
    <dbReference type="NCBI Taxonomy" id="85963"/>
    <lineage>
        <taxon>Bacteria</taxon>
        <taxon>Pseudomonadati</taxon>
        <taxon>Campylobacterota</taxon>
        <taxon>Epsilonproteobacteria</taxon>
        <taxon>Campylobacterales</taxon>
        <taxon>Helicobacteraceae</taxon>
        <taxon>Helicobacter</taxon>
    </lineage>
</organism>
<name>MURG_HELPJ</name>
<feature type="chain" id="PRO_0000109180" description="UDP-N-acetylglucosamine--N-acetylmuramyl-(pentapeptide) pyrophosphoryl-undecaprenol N-acetylglucosamine transferase">
    <location>
        <begin position="1"/>
        <end position="353"/>
    </location>
</feature>
<feature type="binding site" evidence="1">
    <location>
        <begin position="10"/>
        <end position="12"/>
    </location>
    <ligand>
        <name>UDP-N-acetyl-alpha-D-glucosamine</name>
        <dbReference type="ChEBI" id="CHEBI:57705"/>
    </ligand>
</feature>
<feature type="binding site" evidence="1">
    <location>
        <position position="124"/>
    </location>
    <ligand>
        <name>UDP-N-acetyl-alpha-D-glucosamine</name>
        <dbReference type="ChEBI" id="CHEBI:57705"/>
    </ligand>
</feature>
<feature type="binding site" evidence="1">
    <location>
        <position position="183"/>
    </location>
    <ligand>
        <name>UDP-N-acetyl-alpha-D-glucosamine</name>
        <dbReference type="ChEBI" id="CHEBI:57705"/>
    </ligand>
</feature>
<feature type="binding site" evidence="1">
    <location>
        <position position="283"/>
    </location>
    <ligand>
        <name>UDP-N-acetyl-alpha-D-glucosamine</name>
        <dbReference type="ChEBI" id="CHEBI:57705"/>
    </ligand>
</feature>
<evidence type="ECO:0000255" key="1">
    <source>
        <dbReference type="HAMAP-Rule" id="MF_00033"/>
    </source>
</evidence>
<comment type="function">
    <text evidence="1">Cell wall formation. Catalyzes the transfer of a GlcNAc subunit on undecaprenyl-pyrophosphoryl-MurNAc-pentapeptide (lipid intermediate I) to form undecaprenyl-pyrophosphoryl-MurNAc-(pentapeptide)GlcNAc (lipid intermediate II).</text>
</comment>
<comment type="catalytic activity">
    <reaction evidence="1">
        <text>di-trans,octa-cis-undecaprenyl diphospho-N-acetyl-alpha-D-muramoyl-L-alanyl-D-glutamyl-meso-2,6-diaminopimeloyl-D-alanyl-D-alanine + UDP-N-acetyl-alpha-D-glucosamine = di-trans,octa-cis-undecaprenyl diphospho-[N-acetyl-alpha-D-glucosaminyl-(1-&gt;4)]-N-acetyl-alpha-D-muramoyl-L-alanyl-D-glutamyl-meso-2,6-diaminopimeloyl-D-alanyl-D-alanine + UDP + H(+)</text>
        <dbReference type="Rhea" id="RHEA:31227"/>
        <dbReference type="ChEBI" id="CHEBI:15378"/>
        <dbReference type="ChEBI" id="CHEBI:57705"/>
        <dbReference type="ChEBI" id="CHEBI:58223"/>
        <dbReference type="ChEBI" id="CHEBI:61387"/>
        <dbReference type="ChEBI" id="CHEBI:61388"/>
        <dbReference type="EC" id="2.4.1.227"/>
    </reaction>
</comment>
<comment type="pathway">
    <text evidence="1">Cell wall biogenesis; peptidoglycan biosynthesis.</text>
</comment>
<comment type="subcellular location">
    <subcellularLocation>
        <location evidence="1">Cell inner membrane</location>
        <topology evidence="1">Peripheral membrane protein</topology>
        <orientation evidence="1">Cytoplasmic side</orientation>
    </subcellularLocation>
</comment>
<comment type="similarity">
    <text evidence="1">Belongs to the glycosyltransferase 28 family. MurG subfamily.</text>
</comment>
<dbReference type="EC" id="2.4.1.227" evidence="1"/>
<dbReference type="EMBL" id="AE001439">
    <property type="protein sequence ID" value="AAD06652.1"/>
    <property type="molecule type" value="Genomic_DNA"/>
</dbReference>
<dbReference type="PIR" id="G71852">
    <property type="entry name" value="G71852"/>
</dbReference>
<dbReference type="RefSeq" id="WP_000666615.1">
    <property type="nucleotide sequence ID" value="NC_000921.1"/>
</dbReference>
<dbReference type="SMR" id="Q9ZK59"/>
<dbReference type="CAZy" id="GT28">
    <property type="family name" value="Glycosyltransferase Family 28"/>
</dbReference>
<dbReference type="KEGG" id="hpj:jhp_1082"/>
<dbReference type="PATRIC" id="fig|85963.30.peg.1500"/>
<dbReference type="eggNOG" id="COG0707">
    <property type="taxonomic scope" value="Bacteria"/>
</dbReference>
<dbReference type="UniPathway" id="UPA00219"/>
<dbReference type="Proteomes" id="UP000000804">
    <property type="component" value="Chromosome"/>
</dbReference>
<dbReference type="GO" id="GO:0005886">
    <property type="term" value="C:plasma membrane"/>
    <property type="evidence" value="ECO:0007669"/>
    <property type="project" value="UniProtKB-SubCell"/>
</dbReference>
<dbReference type="GO" id="GO:0051991">
    <property type="term" value="F:UDP-N-acetyl-D-glucosamine:N-acetylmuramoyl-L-alanyl-D-glutamyl-meso-2,6-diaminopimelyl-D-alanyl-D-alanine-diphosphoundecaprenol 4-beta-N-acetylglucosaminlytransferase activity"/>
    <property type="evidence" value="ECO:0007669"/>
    <property type="project" value="RHEA"/>
</dbReference>
<dbReference type="GO" id="GO:0050511">
    <property type="term" value="F:undecaprenyldiphospho-muramoylpentapeptide beta-N-acetylglucosaminyltransferase activity"/>
    <property type="evidence" value="ECO:0007669"/>
    <property type="project" value="UniProtKB-UniRule"/>
</dbReference>
<dbReference type="GO" id="GO:0005975">
    <property type="term" value="P:carbohydrate metabolic process"/>
    <property type="evidence" value="ECO:0007669"/>
    <property type="project" value="InterPro"/>
</dbReference>
<dbReference type="GO" id="GO:0051301">
    <property type="term" value="P:cell division"/>
    <property type="evidence" value="ECO:0007669"/>
    <property type="project" value="UniProtKB-KW"/>
</dbReference>
<dbReference type="GO" id="GO:0071555">
    <property type="term" value="P:cell wall organization"/>
    <property type="evidence" value="ECO:0007669"/>
    <property type="project" value="UniProtKB-KW"/>
</dbReference>
<dbReference type="GO" id="GO:0030259">
    <property type="term" value="P:lipid glycosylation"/>
    <property type="evidence" value="ECO:0007669"/>
    <property type="project" value="UniProtKB-UniRule"/>
</dbReference>
<dbReference type="GO" id="GO:0009252">
    <property type="term" value="P:peptidoglycan biosynthetic process"/>
    <property type="evidence" value="ECO:0007669"/>
    <property type="project" value="UniProtKB-UniRule"/>
</dbReference>
<dbReference type="GO" id="GO:0008360">
    <property type="term" value="P:regulation of cell shape"/>
    <property type="evidence" value="ECO:0007669"/>
    <property type="project" value="UniProtKB-KW"/>
</dbReference>
<dbReference type="CDD" id="cd03785">
    <property type="entry name" value="GT28_MurG"/>
    <property type="match status" value="1"/>
</dbReference>
<dbReference type="Gene3D" id="3.40.50.2000">
    <property type="entry name" value="Glycogen Phosphorylase B"/>
    <property type="match status" value="2"/>
</dbReference>
<dbReference type="HAMAP" id="MF_00033">
    <property type="entry name" value="MurG"/>
    <property type="match status" value="1"/>
</dbReference>
<dbReference type="InterPro" id="IPR006009">
    <property type="entry name" value="GlcNAc_MurG"/>
</dbReference>
<dbReference type="InterPro" id="IPR007235">
    <property type="entry name" value="Glyco_trans_28_C"/>
</dbReference>
<dbReference type="InterPro" id="IPR004276">
    <property type="entry name" value="GlycoTrans_28_N"/>
</dbReference>
<dbReference type="NCBIfam" id="TIGR01133">
    <property type="entry name" value="murG"/>
    <property type="match status" value="1"/>
</dbReference>
<dbReference type="PANTHER" id="PTHR21015:SF22">
    <property type="entry name" value="GLYCOSYLTRANSFERASE"/>
    <property type="match status" value="1"/>
</dbReference>
<dbReference type="PANTHER" id="PTHR21015">
    <property type="entry name" value="UDP-N-ACETYLGLUCOSAMINE--N-ACETYLMURAMYL-(PENTAPEPTIDE) PYROPHOSPHORYL-UNDECAPRENOL N-ACETYLGLUCOSAMINE TRANSFERASE 1"/>
    <property type="match status" value="1"/>
</dbReference>
<dbReference type="Pfam" id="PF04101">
    <property type="entry name" value="Glyco_tran_28_C"/>
    <property type="match status" value="1"/>
</dbReference>
<dbReference type="Pfam" id="PF03033">
    <property type="entry name" value="Glyco_transf_28"/>
    <property type="match status" value="1"/>
</dbReference>
<dbReference type="SUPFAM" id="SSF53756">
    <property type="entry name" value="UDP-Glycosyltransferase/glycogen phosphorylase"/>
    <property type="match status" value="1"/>
</dbReference>
<gene>
    <name evidence="1" type="primary">murG</name>
    <name type="ordered locus">jhp_1082</name>
</gene>
<keyword id="KW-0131">Cell cycle</keyword>
<keyword id="KW-0132">Cell division</keyword>
<keyword id="KW-0997">Cell inner membrane</keyword>
<keyword id="KW-1003">Cell membrane</keyword>
<keyword id="KW-0133">Cell shape</keyword>
<keyword id="KW-0961">Cell wall biogenesis/degradation</keyword>
<keyword id="KW-0328">Glycosyltransferase</keyword>
<keyword id="KW-0472">Membrane</keyword>
<keyword id="KW-0573">Peptidoglycan synthesis</keyword>
<keyword id="KW-0808">Transferase</keyword>
<protein>
    <recommendedName>
        <fullName evidence="1">UDP-N-acetylglucosamine--N-acetylmuramyl-(pentapeptide) pyrophosphoryl-undecaprenol N-acetylglucosamine transferase</fullName>
        <ecNumber evidence="1">2.4.1.227</ecNumber>
    </recommendedName>
    <alternativeName>
        <fullName evidence="1">Undecaprenyl-PP-MurNAc-pentapeptide-UDPGlcNAc GlcNAc transferase</fullName>
    </alternativeName>
</protein>
<accession>Q9ZK59</accession>
<sequence>MKFALTGGGTGGHLSIAKALAIELEKQGIEAIYLGSTYGQDKEWFENSPLFSERYFFNTQGVVNKSFFKKIRSLFLQAKAAFKAKEILKKHQITHTISVGGFSAGPASFASLLNKIPLYIHEQNAIKGSLNRYLSPKAKAVFSSYAFKDKGNHVLTSYPVQNAFFDHARTRTEIKHILFLGGSQGAKAINEFALLNAPKLTKQGIKITHICGPNSYEQVRFFYQELGLLDKIELFAFHNNITEVMHRADLCVSRAGASSVWELCANGLPTIFIPYPFASNNHQYYNVLEFEKENLCYVVPQNELLPKKLFEVIRKLNQKDDQGNKNLTTISAKLQQKIAKDGAKTIIETILSA</sequence>